<dbReference type="EC" id="4.3.2.1" evidence="1"/>
<dbReference type="EMBL" id="CP001099">
    <property type="protein sequence ID" value="ACF11393.1"/>
    <property type="molecule type" value="Genomic_DNA"/>
</dbReference>
<dbReference type="RefSeq" id="WP_012502226.1">
    <property type="nucleotide sequence ID" value="NC_011027.1"/>
</dbReference>
<dbReference type="SMR" id="B3QN90"/>
<dbReference type="STRING" id="517417.Cpar_0985"/>
<dbReference type="KEGG" id="cpc:Cpar_0985"/>
<dbReference type="eggNOG" id="COG0165">
    <property type="taxonomic scope" value="Bacteria"/>
</dbReference>
<dbReference type="HOGENOM" id="CLU_027272_2_3_10"/>
<dbReference type="OrthoDB" id="9769623at2"/>
<dbReference type="UniPathway" id="UPA00068">
    <property type="reaction ID" value="UER00114"/>
</dbReference>
<dbReference type="Proteomes" id="UP000008811">
    <property type="component" value="Chromosome"/>
</dbReference>
<dbReference type="GO" id="GO:0005829">
    <property type="term" value="C:cytosol"/>
    <property type="evidence" value="ECO:0007669"/>
    <property type="project" value="TreeGrafter"/>
</dbReference>
<dbReference type="GO" id="GO:0004056">
    <property type="term" value="F:argininosuccinate lyase activity"/>
    <property type="evidence" value="ECO:0007669"/>
    <property type="project" value="UniProtKB-UniRule"/>
</dbReference>
<dbReference type="GO" id="GO:0042450">
    <property type="term" value="P:arginine biosynthetic process via ornithine"/>
    <property type="evidence" value="ECO:0007669"/>
    <property type="project" value="InterPro"/>
</dbReference>
<dbReference type="GO" id="GO:0006526">
    <property type="term" value="P:L-arginine biosynthetic process"/>
    <property type="evidence" value="ECO:0007669"/>
    <property type="project" value="UniProtKB-UniRule"/>
</dbReference>
<dbReference type="CDD" id="cd01359">
    <property type="entry name" value="Argininosuccinate_lyase"/>
    <property type="match status" value="1"/>
</dbReference>
<dbReference type="FunFam" id="1.10.275.10:FF:000002">
    <property type="entry name" value="Argininosuccinate lyase"/>
    <property type="match status" value="1"/>
</dbReference>
<dbReference type="FunFam" id="1.10.40.30:FF:000001">
    <property type="entry name" value="Argininosuccinate lyase"/>
    <property type="match status" value="1"/>
</dbReference>
<dbReference type="FunFam" id="1.20.200.10:FF:000015">
    <property type="entry name" value="argininosuccinate lyase isoform X2"/>
    <property type="match status" value="1"/>
</dbReference>
<dbReference type="Gene3D" id="1.10.40.30">
    <property type="entry name" value="Fumarase/aspartase (C-terminal domain)"/>
    <property type="match status" value="1"/>
</dbReference>
<dbReference type="Gene3D" id="1.20.200.10">
    <property type="entry name" value="Fumarase/aspartase (Central domain)"/>
    <property type="match status" value="1"/>
</dbReference>
<dbReference type="Gene3D" id="1.10.275.10">
    <property type="entry name" value="Fumarase/aspartase (N-terminal domain)"/>
    <property type="match status" value="1"/>
</dbReference>
<dbReference type="HAMAP" id="MF_00006">
    <property type="entry name" value="Arg_succ_lyase"/>
    <property type="match status" value="1"/>
</dbReference>
<dbReference type="InterPro" id="IPR029419">
    <property type="entry name" value="Arg_succ_lyase_C"/>
</dbReference>
<dbReference type="InterPro" id="IPR009049">
    <property type="entry name" value="Argininosuccinate_lyase"/>
</dbReference>
<dbReference type="InterPro" id="IPR024083">
    <property type="entry name" value="Fumarase/histidase_N"/>
</dbReference>
<dbReference type="InterPro" id="IPR020557">
    <property type="entry name" value="Fumarate_lyase_CS"/>
</dbReference>
<dbReference type="InterPro" id="IPR000362">
    <property type="entry name" value="Fumarate_lyase_fam"/>
</dbReference>
<dbReference type="InterPro" id="IPR022761">
    <property type="entry name" value="Fumarate_lyase_N"/>
</dbReference>
<dbReference type="InterPro" id="IPR008948">
    <property type="entry name" value="L-Aspartase-like"/>
</dbReference>
<dbReference type="NCBIfam" id="TIGR00838">
    <property type="entry name" value="argH"/>
    <property type="match status" value="1"/>
</dbReference>
<dbReference type="PANTHER" id="PTHR43814">
    <property type="entry name" value="ARGININOSUCCINATE LYASE"/>
    <property type="match status" value="1"/>
</dbReference>
<dbReference type="PANTHER" id="PTHR43814:SF1">
    <property type="entry name" value="ARGININOSUCCINATE LYASE"/>
    <property type="match status" value="1"/>
</dbReference>
<dbReference type="Pfam" id="PF14698">
    <property type="entry name" value="ASL_C2"/>
    <property type="match status" value="1"/>
</dbReference>
<dbReference type="Pfam" id="PF00206">
    <property type="entry name" value="Lyase_1"/>
    <property type="match status" value="1"/>
</dbReference>
<dbReference type="PRINTS" id="PR00145">
    <property type="entry name" value="ARGSUCLYASE"/>
</dbReference>
<dbReference type="PRINTS" id="PR00149">
    <property type="entry name" value="FUMRATELYASE"/>
</dbReference>
<dbReference type="SUPFAM" id="SSF48557">
    <property type="entry name" value="L-aspartase-like"/>
    <property type="match status" value="1"/>
</dbReference>
<dbReference type="PROSITE" id="PS00163">
    <property type="entry name" value="FUMARATE_LYASES"/>
    <property type="match status" value="1"/>
</dbReference>
<gene>
    <name evidence="1" type="primary">argH</name>
    <name type="ordered locus">Cpar_0985</name>
</gene>
<organism>
    <name type="scientific">Chlorobaculum parvum (strain DSM 263 / NCIMB 8327)</name>
    <name type="common">Chlorobium vibrioforme subsp. thiosulfatophilum</name>
    <dbReference type="NCBI Taxonomy" id="517417"/>
    <lineage>
        <taxon>Bacteria</taxon>
        <taxon>Pseudomonadati</taxon>
        <taxon>Chlorobiota</taxon>
        <taxon>Chlorobiia</taxon>
        <taxon>Chlorobiales</taxon>
        <taxon>Chlorobiaceae</taxon>
        <taxon>Chlorobaculum</taxon>
    </lineage>
</organism>
<comment type="catalytic activity">
    <reaction evidence="1">
        <text>2-(N(omega)-L-arginino)succinate = fumarate + L-arginine</text>
        <dbReference type="Rhea" id="RHEA:24020"/>
        <dbReference type="ChEBI" id="CHEBI:29806"/>
        <dbReference type="ChEBI" id="CHEBI:32682"/>
        <dbReference type="ChEBI" id="CHEBI:57472"/>
        <dbReference type="EC" id="4.3.2.1"/>
    </reaction>
</comment>
<comment type="pathway">
    <text evidence="1">Amino-acid biosynthesis; L-arginine biosynthesis; L-arginine from L-ornithine and carbamoyl phosphate: step 3/3.</text>
</comment>
<comment type="subcellular location">
    <subcellularLocation>
        <location evidence="1">Cytoplasm</location>
    </subcellularLocation>
</comment>
<comment type="similarity">
    <text evidence="1">Belongs to the lyase 1 family. Argininosuccinate lyase subfamily.</text>
</comment>
<sequence length="463" mass="51895">MSDQSKQKELLWQSRFSEPFDREALQFSSSVHVDGLLYREDIQGSIAHATMLGEEGIISAGESEQIVEGLKAVEKEIESGELVPVWEDEDIHTVIENRLKELIGPAAGKLHSGRSRNDQVATDTRLYLRRNIDRLVGLLEAMQSTLLDKAERYKSTIMFGYTHLQRAQPMSAGHYYMAWHSMFGRDAERLADLRKRANISPLGAAAFAGSTLPLNPARSAELLEFDGVFANSIDAVSDRDLVIEFVSACSMIMMHLSRFSEDVILWTSAEFNYLSISDAFATGSSIMPQKKNADIAELVRGKTGRVYGNLMNLLTIMKGLPLSYNRDMQEDKPPLFDTAETTASSLSVFRRMIEKTWLNEERLAKLTAEDLSLATEIAEYLVKKQIPFRDAHRITGKIVAYAIEKSKTLPTISLDEYRTFSESFDEGIYDDLKPDASVNSKKTAGSCSFKSVEEQIARARKNS</sequence>
<accession>B3QN90</accession>
<protein>
    <recommendedName>
        <fullName evidence="1">Argininosuccinate lyase</fullName>
        <shortName evidence="1">ASAL</shortName>
        <ecNumber evidence="1">4.3.2.1</ecNumber>
    </recommendedName>
    <alternativeName>
        <fullName evidence="1">Arginosuccinase</fullName>
    </alternativeName>
</protein>
<keyword id="KW-0028">Amino-acid biosynthesis</keyword>
<keyword id="KW-0055">Arginine biosynthesis</keyword>
<keyword id="KW-0963">Cytoplasm</keyword>
<keyword id="KW-0456">Lyase</keyword>
<name>ARLY_CHLP8</name>
<reference key="1">
    <citation type="submission" date="2008-06" db="EMBL/GenBank/DDBJ databases">
        <title>Complete sequence of Chlorobaculum parvum NCIB 8327.</title>
        <authorList>
            <consortium name="US DOE Joint Genome Institute"/>
            <person name="Lucas S."/>
            <person name="Copeland A."/>
            <person name="Lapidus A."/>
            <person name="Glavina del Rio T."/>
            <person name="Dalin E."/>
            <person name="Tice H."/>
            <person name="Bruce D."/>
            <person name="Goodwin L."/>
            <person name="Pitluck S."/>
            <person name="Schmutz J."/>
            <person name="Larimer F."/>
            <person name="Land M."/>
            <person name="Hauser L."/>
            <person name="Kyrpides N."/>
            <person name="Mikhailova N."/>
            <person name="Zhao F."/>
            <person name="Li T."/>
            <person name="Liu Z."/>
            <person name="Overmann J."/>
            <person name="Bryant D.A."/>
            <person name="Richardson P."/>
        </authorList>
    </citation>
    <scope>NUCLEOTIDE SEQUENCE [LARGE SCALE GENOMIC DNA]</scope>
    <source>
        <strain>DSM 263 / NCIMB 8327</strain>
    </source>
</reference>
<feature type="chain" id="PRO_1000089073" description="Argininosuccinate lyase">
    <location>
        <begin position="1"/>
        <end position="463"/>
    </location>
</feature>
<proteinExistence type="inferred from homology"/>
<evidence type="ECO:0000255" key="1">
    <source>
        <dbReference type="HAMAP-Rule" id="MF_00006"/>
    </source>
</evidence>